<name>RL32_ECOBW</name>
<proteinExistence type="inferred from homology"/>
<reference key="1">
    <citation type="journal article" date="2009" name="J. Bacteriol.">
        <title>Genomic sequencing reveals regulatory mutations and recombinational events in the widely used MC4100 lineage of Escherichia coli K-12.</title>
        <authorList>
            <person name="Ferenci T."/>
            <person name="Zhou Z."/>
            <person name="Betteridge T."/>
            <person name="Ren Y."/>
            <person name="Liu Y."/>
            <person name="Feng L."/>
            <person name="Reeves P.R."/>
            <person name="Wang L."/>
        </authorList>
    </citation>
    <scope>NUCLEOTIDE SEQUENCE [LARGE SCALE GENOMIC DNA]</scope>
    <source>
        <strain>K12 / MC4100 / BW2952</strain>
    </source>
</reference>
<evidence type="ECO:0000255" key="1">
    <source>
        <dbReference type="HAMAP-Rule" id="MF_00340"/>
    </source>
</evidence>
<evidence type="ECO:0000256" key="2">
    <source>
        <dbReference type="SAM" id="MobiDB-lite"/>
    </source>
</evidence>
<evidence type="ECO:0000305" key="3"/>
<comment type="similarity">
    <text evidence="1">Belongs to the bacterial ribosomal protein bL32 family.</text>
</comment>
<dbReference type="EMBL" id="CP001396">
    <property type="protein sequence ID" value="ACR61869.1"/>
    <property type="molecule type" value="Genomic_DNA"/>
</dbReference>
<dbReference type="RefSeq" id="WP_000290727.1">
    <property type="nucleotide sequence ID" value="NC_012759.1"/>
</dbReference>
<dbReference type="SMR" id="C4ZS29"/>
<dbReference type="GeneID" id="93776319"/>
<dbReference type="KEGG" id="ebw:BWG_0937"/>
<dbReference type="HOGENOM" id="CLU_129084_2_1_6"/>
<dbReference type="GO" id="GO:0015934">
    <property type="term" value="C:large ribosomal subunit"/>
    <property type="evidence" value="ECO:0007669"/>
    <property type="project" value="InterPro"/>
</dbReference>
<dbReference type="GO" id="GO:0003735">
    <property type="term" value="F:structural constituent of ribosome"/>
    <property type="evidence" value="ECO:0007669"/>
    <property type="project" value="InterPro"/>
</dbReference>
<dbReference type="GO" id="GO:0006412">
    <property type="term" value="P:translation"/>
    <property type="evidence" value="ECO:0007669"/>
    <property type="project" value="UniProtKB-UniRule"/>
</dbReference>
<dbReference type="HAMAP" id="MF_00340">
    <property type="entry name" value="Ribosomal_bL32"/>
    <property type="match status" value="1"/>
</dbReference>
<dbReference type="InterPro" id="IPR002677">
    <property type="entry name" value="Ribosomal_bL32"/>
</dbReference>
<dbReference type="InterPro" id="IPR044957">
    <property type="entry name" value="Ribosomal_bL32_bact"/>
</dbReference>
<dbReference type="InterPro" id="IPR011332">
    <property type="entry name" value="Ribosomal_zn-bd"/>
</dbReference>
<dbReference type="NCBIfam" id="TIGR01031">
    <property type="entry name" value="rpmF_bact"/>
    <property type="match status" value="1"/>
</dbReference>
<dbReference type="PANTHER" id="PTHR35534">
    <property type="entry name" value="50S RIBOSOMAL PROTEIN L32"/>
    <property type="match status" value="1"/>
</dbReference>
<dbReference type="PANTHER" id="PTHR35534:SF1">
    <property type="entry name" value="LARGE RIBOSOMAL SUBUNIT PROTEIN BL32"/>
    <property type="match status" value="1"/>
</dbReference>
<dbReference type="Pfam" id="PF01783">
    <property type="entry name" value="Ribosomal_L32p"/>
    <property type="match status" value="1"/>
</dbReference>
<dbReference type="SUPFAM" id="SSF57829">
    <property type="entry name" value="Zn-binding ribosomal proteins"/>
    <property type="match status" value="1"/>
</dbReference>
<organism>
    <name type="scientific">Escherichia coli (strain K12 / MC4100 / BW2952)</name>
    <dbReference type="NCBI Taxonomy" id="595496"/>
    <lineage>
        <taxon>Bacteria</taxon>
        <taxon>Pseudomonadati</taxon>
        <taxon>Pseudomonadota</taxon>
        <taxon>Gammaproteobacteria</taxon>
        <taxon>Enterobacterales</taxon>
        <taxon>Enterobacteriaceae</taxon>
        <taxon>Escherichia</taxon>
    </lineage>
</organism>
<gene>
    <name evidence="1" type="primary">rpmF</name>
    <name type="ordered locus">BWG_0937</name>
</gene>
<protein>
    <recommendedName>
        <fullName evidence="1">Large ribosomal subunit protein bL32</fullName>
    </recommendedName>
    <alternativeName>
        <fullName evidence="3">50S ribosomal protein L32</fullName>
    </alternativeName>
</protein>
<accession>C4ZS29</accession>
<sequence length="57" mass="6446">MAVQQNKPTRSKRGMRRSHDALTAVTSLSVDKTSGEKHLRHHITADGYYRGRKVIAK</sequence>
<feature type="chain" id="PRO_1000205260" description="Large ribosomal subunit protein bL32">
    <location>
        <begin position="1"/>
        <end position="57"/>
    </location>
</feature>
<feature type="region of interest" description="Disordered" evidence="2">
    <location>
        <begin position="1"/>
        <end position="38"/>
    </location>
</feature>
<keyword id="KW-0687">Ribonucleoprotein</keyword>
<keyword id="KW-0689">Ribosomal protein</keyword>